<feature type="chain" id="PRO_0000413388" description="Stress response regulator protein 1">
    <location>
        <begin position="1"/>
        <end position="264"/>
    </location>
</feature>
<feature type="domain" description="Response regulatory" evidence="2">
    <location>
        <begin position="138"/>
        <end position="256"/>
    </location>
</feature>
<feature type="region of interest" description="Disordered" evidence="3">
    <location>
        <begin position="50"/>
        <end position="74"/>
    </location>
</feature>
<feature type="compositionally biased region" description="Acidic residues" evidence="3">
    <location>
        <begin position="62"/>
        <end position="74"/>
    </location>
</feature>
<feature type="modified residue" description="4-aspartylphosphate" evidence="2">
    <location>
        <position position="189"/>
    </location>
</feature>
<organism>
    <name type="scientific">Candida tropicalis (strain ATCC MYA-3404 / T1)</name>
    <name type="common">Yeast</name>
    <dbReference type="NCBI Taxonomy" id="294747"/>
    <lineage>
        <taxon>Eukaryota</taxon>
        <taxon>Fungi</taxon>
        <taxon>Dikarya</taxon>
        <taxon>Ascomycota</taxon>
        <taxon>Saccharomycotina</taxon>
        <taxon>Pichiomycetes</taxon>
        <taxon>Debaryomycetaceae</taxon>
        <taxon>Candida/Lodderomyces clade</taxon>
        <taxon>Candida</taxon>
    </lineage>
</organism>
<sequence length="264" mass="30190">MNYIMCRNNLSQSSLPQLSSSAVNDANIDYFSLKPKLSLDTNSSGNSEIIYSDCDNNKNNNDDDDDDDDYNKDTYDELLDPFDTIAVNQHDLEYYSPLTPFEIQNTSPQDSIISSKSSNKSNSLQPFPLTLPNLTNYRFLIVDDNIINLKILNRVLLKLYPRSNIVQVQDSKLVNEILQRQHFDSVFLDIEMPDITGIDIAKFIRSDERFNQMAVIAVTTRNSAKDLQQYKECGIDHTFHKPLNYSLDLIGGSIDDIIERRKSL</sequence>
<keyword id="KW-0597">Phosphoprotein</keyword>
<keyword id="KW-1185">Reference proteome</keyword>
<name>SRR1_CANTT</name>
<evidence type="ECO:0000250" key="1"/>
<evidence type="ECO:0000255" key="2">
    <source>
        <dbReference type="PROSITE-ProRule" id="PRU00169"/>
    </source>
</evidence>
<evidence type="ECO:0000256" key="3">
    <source>
        <dbReference type="SAM" id="MobiDB-lite"/>
    </source>
</evidence>
<reference key="1">
    <citation type="journal article" date="2009" name="Nature">
        <title>Evolution of pathogenicity and sexual reproduction in eight Candida genomes.</title>
        <authorList>
            <person name="Butler G."/>
            <person name="Rasmussen M.D."/>
            <person name="Lin M.F."/>
            <person name="Santos M.A.S."/>
            <person name="Sakthikumar S."/>
            <person name="Munro C.A."/>
            <person name="Rheinbay E."/>
            <person name="Grabherr M."/>
            <person name="Forche A."/>
            <person name="Reedy J.L."/>
            <person name="Agrafioti I."/>
            <person name="Arnaud M.B."/>
            <person name="Bates S."/>
            <person name="Brown A.J.P."/>
            <person name="Brunke S."/>
            <person name="Costanzo M.C."/>
            <person name="Fitzpatrick D.A."/>
            <person name="de Groot P.W.J."/>
            <person name="Harris D."/>
            <person name="Hoyer L.L."/>
            <person name="Hube B."/>
            <person name="Klis F.M."/>
            <person name="Kodira C."/>
            <person name="Lennard N."/>
            <person name="Logue M.E."/>
            <person name="Martin R."/>
            <person name="Neiman A.M."/>
            <person name="Nikolaou E."/>
            <person name="Quail M.A."/>
            <person name="Quinn J."/>
            <person name="Santos M.C."/>
            <person name="Schmitzberger F.F."/>
            <person name="Sherlock G."/>
            <person name="Shah P."/>
            <person name="Silverstein K.A.T."/>
            <person name="Skrzypek M.S."/>
            <person name="Soll D."/>
            <person name="Staggs R."/>
            <person name="Stansfield I."/>
            <person name="Stumpf M.P.H."/>
            <person name="Sudbery P.E."/>
            <person name="Srikantha T."/>
            <person name="Zeng Q."/>
            <person name="Berman J."/>
            <person name="Berriman M."/>
            <person name="Heitman J."/>
            <person name="Gow N.A.R."/>
            <person name="Lorenz M.C."/>
            <person name="Birren B.W."/>
            <person name="Kellis M."/>
            <person name="Cuomo C.A."/>
        </authorList>
    </citation>
    <scope>NUCLEOTIDE SEQUENCE [LARGE SCALE GENOMIC DNA]</scope>
    <source>
        <strain>ATCC MYA-3404 / T1</strain>
    </source>
</reference>
<comment type="function">
    <text evidence="1">Required for stress adaptation, morphogenesis and virulence.</text>
</comment>
<gene>
    <name type="primary">SRR1</name>
    <name type="ORF">CTRG_00590</name>
</gene>
<protein>
    <recommendedName>
        <fullName>Stress response regulator protein 1</fullName>
    </recommendedName>
</protein>
<accession>C5M3F1</accession>
<proteinExistence type="inferred from homology"/>
<dbReference type="EMBL" id="GG692395">
    <property type="protein sequence ID" value="EER35851.1"/>
    <property type="molecule type" value="Genomic_DNA"/>
</dbReference>
<dbReference type="RefSeq" id="XP_002545809.1">
    <property type="nucleotide sequence ID" value="XM_002545763.1"/>
</dbReference>
<dbReference type="SMR" id="C5M3F1"/>
<dbReference type="STRING" id="294747.C5M3F1"/>
<dbReference type="EnsemblFungi" id="CTRG_00590-t43_1">
    <property type="protein sequence ID" value="CTRG_00590-t43_1-p1"/>
    <property type="gene ID" value="CTRG_00590"/>
</dbReference>
<dbReference type="GeneID" id="8296882"/>
<dbReference type="KEGG" id="ctp:CTRG_00590"/>
<dbReference type="VEuPathDB" id="FungiDB:CTRG_00590"/>
<dbReference type="eggNOG" id="ENOG502SFN6">
    <property type="taxonomic scope" value="Eukaryota"/>
</dbReference>
<dbReference type="HOGENOM" id="CLU_065405_0_0_1"/>
<dbReference type="OrthoDB" id="303614at2759"/>
<dbReference type="Proteomes" id="UP000002037">
    <property type="component" value="Unassembled WGS sequence"/>
</dbReference>
<dbReference type="GO" id="GO:0036180">
    <property type="term" value="P:filamentous growth of a population of unicellular organisms in response to biotic stimulus"/>
    <property type="evidence" value="ECO:0007669"/>
    <property type="project" value="UniProtKB-ARBA"/>
</dbReference>
<dbReference type="GO" id="GO:0000160">
    <property type="term" value="P:phosphorelay signal transduction system"/>
    <property type="evidence" value="ECO:0007669"/>
    <property type="project" value="InterPro"/>
</dbReference>
<dbReference type="GO" id="GO:1900445">
    <property type="term" value="P:positive regulation of filamentous growth of a population of unicellular organisms in response to biotic stimulus"/>
    <property type="evidence" value="ECO:0007669"/>
    <property type="project" value="UniProtKB-ARBA"/>
</dbReference>
<dbReference type="CDD" id="cd17546">
    <property type="entry name" value="REC_hyHK_CKI1_RcsC-like"/>
    <property type="match status" value="1"/>
</dbReference>
<dbReference type="Gene3D" id="3.40.50.2300">
    <property type="match status" value="1"/>
</dbReference>
<dbReference type="InterPro" id="IPR050595">
    <property type="entry name" value="Bact_response_regulator"/>
</dbReference>
<dbReference type="InterPro" id="IPR011006">
    <property type="entry name" value="CheY-like_superfamily"/>
</dbReference>
<dbReference type="InterPro" id="IPR001789">
    <property type="entry name" value="Sig_transdc_resp-reg_receiver"/>
</dbReference>
<dbReference type="PANTHER" id="PTHR44591:SF3">
    <property type="entry name" value="RESPONSE REGULATORY DOMAIN-CONTAINING PROTEIN"/>
    <property type="match status" value="1"/>
</dbReference>
<dbReference type="PANTHER" id="PTHR44591">
    <property type="entry name" value="STRESS RESPONSE REGULATOR PROTEIN 1"/>
    <property type="match status" value="1"/>
</dbReference>
<dbReference type="Pfam" id="PF00072">
    <property type="entry name" value="Response_reg"/>
    <property type="match status" value="1"/>
</dbReference>
<dbReference type="SMART" id="SM00448">
    <property type="entry name" value="REC"/>
    <property type="match status" value="1"/>
</dbReference>
<dbReference type="SUPFAM" id="SSF52172">
    <property type="entry name" value="CheY-like"/>
    <property type="match status" value="1"/>
</dbReference>
<dbReference type="PROSITE" id="PS50110">
    <property type="entry name" value="RESPONSE_REGULATORY"/>
    <property type="match status" value="1"/>
</dbReference>